<name>CRTN_STAHJ</name>
<reference key="1">
    <citation type="journal article" date="2005" name="J. Bacteriol.">
        <title>Whole-genome sequencing of Staphylococcus haemolyticus uncovers the extreme plasticity of its genome and the evolution of human-colonizing staphylococcal species.</title>
        <authorList>
            <person name="Takeuchi F."/>
            <person name="Watanabe S."/>
            <person name="Baba T."/>
            <person name="Yuzawa H."/>
            <person name="Ito T."/>
            <person name="Morimoto Y."/>
            <person name="Kuroda M."/>
            <person name="Cui L."/>
            <person name="Takahashi M."/>
            <person name="Ankai A."/>
            <person name="Baba S."/>
            <person name="Fukui S."/>
            <person name="Lee J.C."/>
            <person name="Hiramatsu K."/>
        </authorList>
    </citation>
    <scope>NUCLEOTIDE SEQUENCE [LARGE SCALE GENOMIC DNA]</scope>
    <source>
        <strain>JCSC1435</strain>
    </source>
</reference>
<organism>
    <name type="scientific">Staphylococcus haemolyticus (strain JCSC1435)</name>
    <dbReference type="NCBI Taxonomy" id="279808"/>
    <lineage>
        <taxon>Bacteria</taxon>
        <taxon>Bacillati</taxon>
        <taxon>Bacillota</taxon>
        <taxon>Bacilli</taxon>
        <taxon>Bacillales</taxon>
        <taxon>Staphylococcaceae</taxon>
        <taxon>Staphylococcus</taxon>
    </lineage>
</organism>
<evidence type="ECO:0000250" key="1">
    <source>
        <dbReference type="UniProtKB" id="O07855"/>
    </source>
</evidence>
<evidence type="ECO:0000255" key="2"/>
<evidence type="ECO:0000305" key="3"/>
<dbReference type="EC" id="1.3.8.-" evidence="1"/>
<dbReference type="EMBL" id="AP006716">
    <property type="protein sequence ID" value="BAE03800.1"/>
    <property type="status" value="ALT_FRAME"/>
    <property type="molecule type" value="Genomic_DNA"/>
</dbReference>
<dbReference type="KEGG" id="sha:SH0491"/>
<dbReference type="eggNOG" id="COG1233">
    <property type="taxonomic scope" value="Bacteria"/>
</dbReference>
<dbReference type="HOGENOM" id="CLU_019722_2_1_9"/>
<dbReference type="UniPathway" id="UPA00029">
    <property type="reaction ID" value="UER00557"/>
</dbReference>
<dbReference type="Proteomes" id="UP000000543">
    <property type="component" value="Chromosome"/>
</dbReference>
<dbReference type="GO" id="GO:0102223">
    <property type="term" value="F:4,4'-diapophytoene desaturase (4,4'-diaponeurosporene-forming)"/>
    <property type="evidence" value="ECO:0007669"/>
    <property type="project" value="RHEA"/>
</dbReference>
<dbReference type="GO" id="GO:0016117">
    <property type="term" value="P:carotenoid biosynthetic process"/>
    <property type="evidence" value="ECO:0007669"/>
    <property type="project" value="UniProtKB-KW"/>
</dbReference>
<dbReference type="Gene3D" id="3.50.50.60">
    <property type="entry name" value="FAD/NAD(P)-binding domain"/>
    <property type="match status" value="2"/>
</dbReference>
<dbReference type="InterPro" id="IPR002937">
    <property type="entry name" value="Amino_oxidase"/>
</dbReference>
<dbReference type="InterPro" id="IPR014105">
    <property type="entry name" value="Carotenoid/retinoid_OxRdtase"/>
</dbReference>
<dbReference type="InterPro" id="IPR036188">
    <property type="entry name" value="FAD/NAD-bd_sf"/>
</dbReference>
<dbReference type="NCBIfam" id="TIGR02734">
    <property type="entry name" value="crtI_fam"/>
    <property type="match status" value="1"/>
</dbReference>
<dbReference type="PANTHER" id="PTHR43734">
    <property type="entry name" value="PHYTOENE DESATURASE"/>
    <property type="match status" value="1"/>
</dbReference>
<dbReference type="PANTHER" id="PTHR43734:SF1">
    <property type="entry name" value="PHYTOENE DESATURASE"/>
    <property type="match status" value="1"/>
</dbReference>
<dbReference type="Pfam" id="PF01593">
    <property type="entry name" value="Amino_oxidase"/>
    <property type="match status" value="1"/>
</dbReference>
<dbReference type="PRINTS" id="PR00419">
    <property type="entry name" value="ADXRDTASE"/>
</dbReference>
<dbReference type="SUPFAM" id="SSF51905">
    <property type="entry name" value="FAD/NAD(P)-binding domain"/>
    <property type="match status" value="1"/>
</dbReference>
<accession>Q4L975</accession>
<comment type="function">
    <text evidence="1">Involved in the biosynthesis of the yellow-orange carotenoid staphyloxanthin, which plays a role in the virulence via its protective function against oxidative stress. Catalyzes three successive dehydrogenation reactions that lead to the introduction of three double bonds into 4,4'-diapophytoene (dehydrosqualene), with 4,4'-diapophytofluene and 4,4'-diapo-zeta-carotene as intermediates, and 4,4'-diaponeurosporene (the major deep-yellow pigment in staphylococci strains) as the end product.</text>
</comment>
<comment type="catalytic activity">
    <reaction evidence="1">
        <text>15-cis-4,4'-diapophytoene + 3 FAD + 3 H(+) = all-trans-4,4'-diaponeurosporene + 3 FADH2</text>
        <dbReference type="Rhea" id="RHEA:42800"/>
        <dbReference type="ChEBI" id="CHEBI:15378"/>
        <dbReference type="ChEBI" id="CHEBI:57692"/>
        <dbReference type="ChEBI" id="CHEBI:58307"/>
        <dbReference type="ChEBI" id="CHEBI:62738"/>
        <dbReference type="ChEBI" id="CHEBI:62743"/>
    </reaction>
</comment>
<comment type="pathway">
    <text evidence="1">Carotenoid biosynthesis; staphyloxanthin biosynthesis; staphyloxanthin from farnesyl diphosphate: step 2/5.</text>
</comment>
<comment type="similarity">
    <text evidence="3">Belongs to the carotenoid/retinoid oxidoreductase family. CrtN subfamily.</text>
</comment>
<comment type="sequence caution" evidence="3">
    <conflict type="frameshift">
        <sequence resource="EMBL-CDS" id="BAE03800"/>
    </conflict>
</comment>
<gene>
    <name evidence="1" type="primary">crtN</name>
    <name type="ordered locus">SH0491</name>
</gene>
<feature type="chain" id="PRO_0000272199" description="4,4'-diapophytoene desaturase (4,4'-diaponeurosporene-forming)">
    <location>
        <begin position="1"/>
        <end position="501"/>
    </location>
</feature>
<feature type="binding site" evidence="2">
    <location>
        <begin position="5"/>
        <end position="17"/>
    </location>
    <ligand>
        <name>FAD</name>
        <dbReference type="ChEBI" id="CHEBI:57692"/>
    </ligand>
</feature>
<protein>
    <recommendedName>
        <fullName evidence="1">4,4'-diapophytoene desaturase (4,4'-diaponeurosporene-forming)</fullName>
        <ecNumber evidence="1">1.3.8.-</ecNumber>
    </recommendedName>
    <alternativeName>
        <fullName evidence="1">Dehydrosqualene desaturase</fullName>
    </alternativeName>
</protein>
<sequence length="501" mass="56542">MXIAVVGAGVTGLAAAARLAAKGHQVTIFEKNEQVGGRMSQFKKDGFTFDMGPTIVMVPDVYKAVFEESGKRFEDYVDMKPLTHIFDIYFSDKDKVSVSTDLAQLSQTLEATEPGSTQGFMQFLTDVYKRYEVARKYFLERTFRKPSEFYNPLTLYRGLKLKTFNNANQLIDNYVSNEKIRKLLAFQTLYIGIDPKQGPSIYSIIPMIEMVHGVHYIKGGMYGLAQGLLQLGQDHGVKVELNADVQEIIIDPKFKRADGLRVNGDIRRFDKVLCTADFPYVAQNLMPVHSPLKNYSPEKVDNMDYSCSAFLIYAGINRQLRDKLHVHNVVFARDFRGNIDDIFSGKMPDDPSLYLYFPSVEDEALAPKDQTGMYVLMPVPELKTGEIDWNDPNMVEKAKDVIYNKLETIEALKDIRQDVVSETVFTPLDFESRYNAKFGSAFGLMPTLTQSNYYRPPNVSRDYKDLYFAGASTHPGAGVPIVLTSAKITAEAMLEDIEHGK</sequence>
<proteinExistence type="inferred from homology"/>
<keyword id="KW-0125">Carotenoid biosynthesis</keyword>
<keyword id="KW-0274">FAD</keyword>
<keyword id="KW-0285">Flavoprotein</keyword>
<keyword id="KW-0560">Oxidoreductase</keyword>
<keyword id="KW-0843">Virulence</keyword>